<organism>
    <name type="scientific">Desulforudis audaxviator (strain MP104C)</name>
    <dbReference type="NCBI Taxonomy" id="477974"/>
    <lineage>
        <taxon>Bacteria</taxon>
        <taxon>Bacillati</taxon>
        <taxon>Bacillota</taxon>
        <taxon>Clostridia</taxon>
        <taxon>Thermoanaerobacterales</taxon>
        <taxon>Candidatus Desulforudaceae</taxon>
        <taxon>Candidatus Desulforudis</taxon>
    </lineage>
</organism>
<gene>
    <name evidence="1" type="primary">mraY</name>
    <name type="ordered locus">Daud_1439</name>
</gene>
<feature type="chain" id="PRO_1000090619" description="Phospho-N-acetylmuramoyl-pentapeptide-transferase">
    <location>
        <begin position="1"/>
        <end position="334"/>
    </location>
</feature>
<feature type="transmembrane region" description="Helical" evidence="1">
    <location>
        <begin position="2"/>
        <end position="22"/>
    </location>
</feature>
<feature type="transmembrane region" description="Helical" evidence="1">
    <location>
        <begin position="55"/>
        <end position="75"/>
    </location>
</feature>
<feature type="transmembrane region" description="Helical" evidence="1">
    <location>
        <begin position="78"/>
        <end position="98"/>
    </location>
</feature>
<feature type="transmembrane region" description="Helical" evidence="1">
    <location>
        <begin position="116"/>
        <end position="136"/>
    </location>
</feature>
<feature type="transmembrane region" description="Helical" evidence="1">
    <location>
        <begin position="154"/>
        <end position="174"/>
    </location>
</feature>
<feature type="transmembrane region" description="Helical" evidence="1">
    <location>
        <begin position="187"/>
        <end position="207"/>
    </location>
</feature>
<feature type="transmembrane region" description="Helical" evidence="1">
    <location>
        <begin position="211"/>
        <end position="231"/>
    </location>
</feature>
<feature type="transmembrane region" description="Helical" evidence="1">
    <location>
        <begin position="236"/>
        <end position="256"/>
    </location>
</feature>
<feature type="transmembrane region" description="Helical" evidence="1">
    <location>
        <begin position="262"/>
        <end position="282"/>
    </location>
</feature>
<feature type="transmembrane region" description="Helical" evidence="1">
    <location>
        <begin position="311"/>
        <end position="331"/>
    </location>
</feature>
<protein>
    <recommendedName>
        <fullName evidence="1">Phospho-N-acetylmuramoyl-pentapeptide-transferase</fullName>
        <ecNumber evidence="1">2.7.8.13</ecNumber>
    </recommendedName>
    <alternativeName>
        <fullName evidence="1">UDP-MurNAc-pentapeptide phosphotransferase</fullName>
    </alternativeName>
</protein>
<evidence type="ECO:0000255" key="1">
    <source>
        <dbReference type="HAMAP-Rule" id="MF_00038"/>
    </source>
</evidence>
<dbReference type="EC" id="2.7.8.13" evidence="1"/>
<dbReference type="EMBL" id="CP000860">
    <property type="protein sequence ID" value="ACA59946.1"/>
    <property type="molecule type" value="Genomic_DNA"/>
</dbReference>
<dbReference type="RefSeq" id="WP_012302531.1">
    <property type="nucleotide sequence ID" value="NC_010424.1"/>
</dbReference>
<dbReference type="SMR" id="B1I4C7"/>
<dbReference type="STRING" id="477974.Daud_1439"/>
<dbReference type="KEGG" id="dau:Daud_1439"/>
<dbReference type="eggNOG" id="COG0472">
    <property type="taxonomic scope" value="Bacteria"/>
</dbReference>
<dbReference type="HOGENOM" id="CLU_023982_0_1_9"/>
<dbReference type="OrthoDB" id="9805475at2"/>
<dbReference type="UniPathway" id="UPA00219"/>
<dbReference type="Proteomes" id="UP000008544">
    <property type="component" value="Chromosome"/>
</dbReference>
<dbReference type="GO" id="GO:0005886">
    <property type="term" value="C:plasma membrane"/>
    <property type="evidence" value="ECO:0007669"/>
    <property type="project" value="UniProtKB-SubCell"/>
</dbReference>
<dbReference type="GO" id="GO:0046872">
    <property type="term" value="F:metal ion binding"/>
    <property type="evidence" value="ECO:0007669"/>
    <property type="project" value="UniProtKB-KW"/>
</dbReference>
<dbReference type="GO" id="GO:0008963">
    <property type="term" value="F:phospho-N-acetylmuramoyl-pentapeptide-transferase activity"/>
    <property type="evidence" value="ECO:0007669"/>
    <property type="project" value="UniProtKB-UniRule"/>
</dbReference>
<dbReference type="GO" id="GO:0051992">
    <property type="term" value="F:UDP-N-acetylmuramoyl-L-alanyl-D-glutamyl-meso-2,6-diaminopimelyl-D-alanyl-D-alanine:undecaprenyl-phosphate transferase activity"/>
    <property type="evidence" value="ECO:0007669"/>
    <property type="project" value="RHEA"/>
</dbReference>
<dbReference type="GO" id="GO:0051301">
    <property type="term" value="P:cell division"/>
    <property type="evidence" value="ECO:0007669"/>
    <property type="project" value="UniProtKB-KW"/>
</dbReference>
<dbReference type="GO" id="GO:0071555">
    <property type="term" value="P:cell wall organization"/>
    <property type="evidence" value="ECO:0007669"/>
    <property type="project" value="UniProtKB-KW"/>
</dbReference>
<dbReference type="GO" id="GO:0009252">
    <property type="term" value="P:peptidoglycan biosynthetic process"/>
    <property type="evidence" value="ECO:0007669"/>
    <property type="project" value="UniProtKB-UniRule"/>
</dbReference>
<dbReference type="GO" id="GO:0008360">
    <property type="term" value="P:regulation of cell shape"/>
    <property type="evidence" value="ECO:0007669"/>
    <property type="project" value="UniProtKB-KW"/>
</dbReference>
<dbReference type="CDD" id="cd06852">
    <property type="entry name" value="GT_MraY"/>
    <property type="match status" value="1"/>
</dbReference>
<dbReference type="HAMAP" id="MF_00038">
    <property type="entry name" value="MraY"/>
    <property type="match status" value="1"/>
</dbReference>
<dbReference type="InterPro" id="IPR000715">
    <property type="entry name" value="Glycosyl_transferase_4"/>
</dbReference>
<dbReference type="InterPro" id="IPR003524">
    <property type="entry name" value="PNAcMuramoyl-5peptid_Trfase"/>
</dbReference>
<dbReference type="InterPro" id="IPR018480">
    <property type="entry name" value="PNAcMuramoyl-5peptid_Trfase_CS"/>
</dbReference>
<dbReference type="NCBIfam" id="TIGR00445">
    <property type="entry name" value="mraY"/>
    <property type="match status" value="1"/>
</dbReference>
<dbReference type="PANTHER" id="PTHR22926">
    <property type="entry name" value="PHOSPHO-N-ACETYLMURAMOYL-PENTAPEPTIDE-TRANSFERASE"/>
    <property type="match status" value="1"/>
</dbReference>
<dbReference type="PANTHER" id="PTHR22926:SF5">
    <property type="entry name" value="PHOSPHO-N-ACETYLMURAMOYL-PENTAPEPTIDE-TRANSFERASE HOMOLOG"/>
    <property type="match status" value="1"/>
</dbReference>
<dbReference type="Pfam" id="PF00953">
    <property type="entry name" value="Glycos_transf_4"/>
    <property type="match status" value="1"/>
</dbReference>
<dbReference type="Pfam" id="PF10555">
    <property type="entry name" value="MraY_sig1"/>
    <property type="match status" value="1"/>
</dbReference>
<dbReference type="PROSITE" id="PS01347">
    <property type="entry name" value="MRAY_1"/>
    <property type="match status" value="1"/>
</dbReference>
<dbReference type="PROSITE" id="PS01348">
    <property type="entry name" value="MRAY_2"/>
    <property type="match status" value="1"/>
</dbReference>
<sequence>MIPVLVAAGVAFLVTLVLGPVVIPLLHRLRFGQRVRSDGPTRHLQKTGTPTMGGVIFLFGAAAAVLVVAFLPGGVRAGWIEGLLVLAVALGFGVLGFMDDFAKVVHKRSLGLRAREKLLGQVLIAVALAVTAVFVLERGTDFLVPFSGIVVHGGLALDLGWWFFLGVTVFVVLATANAVNLTDGLDGLAAGTFAVAALAFAMIALVMDKTWVGIVLGALVGGCVGFLCYNFYPARVFMGDTGSLALGGGLSAAAVITKSELFLLIIGGVFVIETLSVIIQVIWYQLTGRRVFRMSPLHHHFELVGWSETRVVLTFWTVGLVLAVLGLAGLKGLG</sequence>
<keyword id="KW-0131">Cell cycle</keyword>
<keyword id="KW-0132">Cell division</keyword>
<keyword id="KW-1003">Cell membrane</keyword>
<keyword id="KW-0133">Cell shape</keyword>
<keyword id="KW-0961">Cell wall biogenesis/degradation</keyword>
<keyword id="KW-0460">Magnesium</keyword>
<keyword id="KW-0472">Membrane</keyword>
<keyword id="KW-0479">Metal-binding</keyword>
<keyword id="KW-0573">Peptidoglycan synthesis</keyword>
<keyword id="KW-1185">Reference proteome</keyword>
<keyword id="KW-0808">Transferase</keyword>
<keyword id="KW-0812">Transmembrane</keyword>
<keyword id="KW-1133">Transmembrane helix</keyword>
<comment type="function">
    <text evidence="1">Catalyzes the initial step of the lipid cycle reactions in the biosynthesis of the cell wall peptidoglycan: transfers peptidoglycan precursor phospho-MurNAc-pentapeptide from UDP-MurNAc-pentapeptide onto the lipid carrier undecaprenyl phosphate, yielding undecaprenyl-pyrophosphoryl-MurNAc-pentapeptide, known as lipid I.</text>
</comment>
<comment type="catalytic activity">
    <reaction evidence="1">
        <text>UDP-N-acetyl-alpha-D-muramoyl-L-alanyl-gamma-D-glutamyl-meso-2,6-diaminopimeloyl-D-alanyl-D-alanine + di-trans,octa-cis-undecaprenyl phosphate = di-trans,octa-cis-undecaprenyl diphospho-N-acetyl-alpha-D-muramoyl-L-alanyl-D-glutamyl-meso-2,6-diaminopimeloyl-D-alanyl-D-alanine + UMP</text>
        <dbReference type="Rhea" id="RHEA:28386"/>
        <dbReference type="ChEBI" id="CHEBI:57865"/>
        <dbReference type="ChEBI" id="CHEBI:60392"/>
        <dbReference type="ChEBI" id="CHEBI:61386"/>
        <dbReference type="ChEBI" id="CHEBI:61387"/>
        <dbReference type="EC" id="2.7.8.13"/>
    </reaction>
</comment>
<comment type="cofactor">
    <cofactor evidence="1">
        <name>Mg(2+)</name>
        <dbReference type="ChEBI" id="CHEBI:18420"/>
    </cofactor>
</comment>
<comment type="pathway">
    <text evidence="1">Cell wall biogenesis; peptidoglycan biosynthesis.</text>
</comment>
<comment type="subcellular location">
    <subcellularLocation>
        <location evidence="1">Cell membrane</location>
        <topology evidence="1">Multi-pass membrane protein</topology>
    </subcellularLocation>
</comment>
<comment type="similarity">
    <text evidence="1">Belongs to the glycosyltransferase 4 family. MraY subfamily.</text>
</comment>
<proteinExistence type="inferred from homology"/>
<reference key="1">
    <citation type="submission" date="2007-10" db="EMBL/GenBank/DDBJ databases">
        <title>Complete sequence of chromosome of Desulforudis audaxviator MP104C.</title>
        <authorList>
            <person name="Copeland A."/>
            <person name="Lucas S."/>
            <person name="Lapidus A."/>
            <person name="Barry K."/>
            <person name="Glavina del Rio T."/>
            <person name="Dalin E."/>
            <person name="Tice H."/>
            <person name="Bruce D."/>
            <person name="Pitluck S."/>
            <person name="Lowry S.R."/>
            <person name="Larimer F."/>
            <person name="Land M.L."/>
            <person name="Hauser L."/>
            <person name="Kyrpides N."/>
            <person name="Ivanova N.N."/>
            <person name="Richardson P."/>
        </authorList>
    </citation>
    <scope>NUCLEOTIDE SEQUENCE [LARGE SCALE GENOMIC DNA]</scope>
    <source>
        <strain>MP104C</strain>
    </source>
</reference>
<name>MRAY_DESAP</name>
<accession>B1I4C7</accession>